<protein>
    <recommendedName>
        <fullName evidence="1">Probable succinate transporter subunit YjjB</fullName>
    </recommendedName>
</protein>
<comment type="function">
    <text evidence="1">Involved in succinate export with YjjP. Both proteins are required for export.</text>
</comment>
<comment type="subunit">
    <text evidence="1">The transporter is composed of YjjB and YjjP.</text>
</comment>
<comment type="subcellular location">
    <subcellularLocation>
        <location evidence="1">Cell inner membrane</location>
        <topology evidence="1">Multi-pass membrane protein</topology>
    </subcellularLocation>
</comment>
<comment type="similarity">
    <text evidence="1">Belongs to the ThrE exporter (TC 2.A.79) family.</text>
</comment>
<comment type="sequence caution" evidence="2">
    <conflict type="erroneous initiation">
        <sequence resource="EMBL-CDS" id="CAL10738"/>
    </conflict>
</comment>
<gene>
    <name evidence="1" type="primary">yjjB</name>
    <name type="ordered locus">YE0625</name>
</gene>
<dbReference type="EMBL" id="AM286415">
    <property type="protein sequence ID" value="CAL10738.1"/>
    <property type="status" value="ALT_INIT"/>
    <property type="molecule type" value="Genomic_DNA"/>
</dbReference>
<dbReference type="RefSeq" id="WP_042661302.1">
    <property type="nucleotide sequence ID" value="NC_008800.1"/>
</dbReference>
<dbReference type="RefSeq" id="YP_001004978.2">
    <property type="nucleotide sequence ID" value="NC_008800.1"/>
</dbReference>
<dbReference type="KEGG" id="yen:YE0625"/>
<dbReference type="PATRIC" id="fig|393305.7.peg.719"/>
<dbReference type="eggNOG" id="COG3610">
    <property type="taxonomic scope" value="Bacteria"/>
</dbReference>
<dbReference type="HOGENOM" id="CLU_117642_1_0_6"/>
<dbReference type="OrthoDB" id="9810047at2"/>
<dbReference type="Proteomes" id="UP000000642">
    <property type="component" value="Chromosome"/>
</dbReference>
<dbReference type="GO" id="GO:0005886">
    <property type="term" value="C:plasma membrane"/>
    <property type="evidence" value="ECO:0007669"/>
    <property type="project" value="UniProtKB-SubCell"/>
</dbReference>
<dbReference type="GO" id="GO:0015744">
    <property type="term" value="P:succinate transport"/>
    <property type="evidence" value="ECO:0007669"/>
    <property type="project" value="UniProtKB-UniRule"/>
</dbReference>
<dbReference type="HAMAP" id="MF_01191">
    <property type="entry name" value="YjjB"/>
    <property type="match status" value="1"/>
</dbReference>
<dbReference type="InterPro" id="IPR024528">
    <property type="entry name" value="ThrE_2"/>
</dbReference>
<dbReference type="InterPro" id="IPR050539">
    <property type="entry name" value="ThrE_Dicarb/AminoAcid_Exp"/>
</dbReference>
<dbReference type="InterPro" id="IPR020914">
    <property type="entry name" value="YjjB"/>
</dbReference>
<dbReference type="NCBIfam" id="NF007391">
    <property type="entry name" value="PRK09917.1"/>
    <property type="match status" value="1"/>
</dbReference>
<dbReference type="PANTHER" id="PTHR34390:SF1">
    <property type="entry name" value="SUCCINATE TRANSPORTER SUBUNIT YJJB-RELATED"/>
    <property type="match status" value="1"/>
</dbReference>
<dbReference type="PANTHER" id="PTHR34390">
    <property type="entry name" value="UPF0442 PROTEIN YJJB-RELATED"/>
    <property type="match status" value="1"/>
</dbReference>
<dbReference type="Pfam" id="PF12821">
    <property type="entry name" value="ThrE_2"/>
    <property type="match status" value="1"/>
</dbReference>
<evidence type="ECO:0000255" key="1">
    <source>
        <dbReference type="HAMAP-Rule" id="MF_01191"/>
    </source>
</evidence>
<evidence type="ECO:0000305" key="2"/>
<name>YJJB_YERE8</name>
<proteinExistence type="inferred from homology"/>
<reference key="1">
    <citation type="journal article" date="2006" name="PLoS Genet.">
        <title>The complete genome sequence and comparative genome analysis of the high pathogenicity Yersinia enterocolitica strain 8081.</title>
        <authorList>
            <person name="Thomson N.R."/>
            <person name="Howard S."/>
            <person name="Wren B.W."/>
            <person name="Holden M.T.G."/>
            <person name="Crossman L."/>
            <person name="Challis G.L."/>
            <person name="Churcher C."/>
            <person name="Mungall K."/>
            <person name="Brooks K."/>
            <person name="Chillingworth T."/>
            <person name="Feltwell T."/>
            <person name="Abdellah Z."/>
            <person name="Hauser H."/>
            <person name="Jagels K."/>
            <person name="Maddison M."/>
            <person name="Moule S."/>
            <person name="Sanders M."/>
            <person name="Whitehead S."/>
            <person name="Quail M.A."/>
            <person name="Dougan G."/>
            <person name="Parkhill J."/>
            <person name="Prentice M.B."/>
        </authorList>
    </citation>
    <scope>NUCLEOTIDE SEQUENCE [LARGE SCALE GENOMIC DNA]</scope>
    <source>
        <strain>NCTC 13174 / 8081</strain>
    </source>
</reference>
<sequence length="156" mass="16986">MVMSLLWALLQDMVLAAIPALGFAMVFNVPMRALRYCALLGALGHGSRMLMIHFGMDIEPASLLASIMIGMIGINWSRWLLAHPKVFTVAAVIPMFPGISAYTAMISVVEISHLGYSEVLMSTMVTNFLKASFIVGSLSIGLSLPGLWLYRKRPGV</sequence>
<organism>
    <name type="scientific">Yersinia enterocolitica serotype O:8 / biotype 1B (strain NCTC 13174 / 8081)</name>
    <dbReference type="NCBI Taxonomy" id="393305"/>
    <lineage>
        <taxon>Bacteria</taxon>
        <taxon>Pseudomonadati</taxon>
        <taxon>Pseudomonadota</taxon>
        <taxon>Gammaproteobacteria</taxon>
        <taxon>Enterobacterales</taxon>
        <taxon>Yersiniaceae</taxon>
        <taxon>Yersinia</taxon>
    </lineage>
</organism>
<accession>A1JJF0</accession>
<keyword id="KW-0997">Cell inner membrane</keyword>
<keyword id="KW-1003">Cell membrane</keyword>
<keyword id="KW-0472">Membrane</keyword>
<keyword id="KW-0812">Transmembrane</keyword>
<keyword id="KW-1133">Transmembrane helix</keyword>
<keyword id="KW-0813">Transport</keyword>
<feature type="chain" id="PRO_0000293681" description="Probable succinate transporter subunit YjjB">
    <location>
        <begin position="1"/>
        <end position="156"/>
    </location>
</feature>
<feature type="transmembrane region" description="Helical" evidence="1">
    <location>
        <begin position="7"/>
        <end position="27"/>
    </location>
</feature>
<feature type="transmembrane region" description="Helical" evidence="1">
    <location>
        <begin position="54"/>
        <end position="74"/>
    </location>
</feature>
<feature type="transmembrane region" description="Helical" evidence="1">
    <location>
        <begin position="86"/>
        <end position="106"/>
    </location>
</feature>
<feature type="transmembrane region" description="Helical" evidence="1">
    <location>
        <begin position="128"/>
        <end position="148"/>
    </location>
</feature>